<keyword id="KW-0028">Amino-acid biosynthesis</keyword>
<keyword id="KW-0057">Aromatic amino acid biosynthesis</keyword>
<keyword id="KW-0067">ATP-binding</keyword>
<keyword id="KW-0963">Cytoplasm</keyword>
<keyword id="KW-0418">Kinase</keyword>
<keyword id="KW-0460">Magnesium</keyword>
<keyword id="KW-0479">Metal-binding</keyword>
<keyword id="KW-0547">Nucleotide-binding</keyword>
<keyword id="KW-0808">Transferase</keyword>
<reference key="1">
    <citation type="submission" date="2009-07" db="EMBL/GenBank/DDBJ databases">
        <title>Complete sequence of Pectobacterium carotovorum subsp. carotovorum PC1.</title>
        <authorList>
            <consortium name="US DOE Joint Genome Institute"/>
            <person name="Lucas S."/>
            <person name="Copeland A."/>
            <person name="Lapidus A."/>
            <person name="Glavina del Rio T."/>
            <person name="Tice H."/>
            <person name="Bruce D."/>
            <person name="Goodwin L."/>
            <person name="Pitluck S."/>
            <person name="Munk A.C."/>
            <person name="Brettin T."/>
            <person name="Detter J.C."/>
            <person name="Han C."/>
            <person name="Tapia R."/>
            <person name="Larimer F."/>
            <person name="Land M."/>
            <person name="Hauser L."/>
            <person name="Kyrpides N."/>
            <person name="Mikhailova N."/>
            <person name="Balakrishnan V."/>
            <person name="Glasner J."/>
            <person name="Perna N.T."/>
        </authorList>
    </citation>
    <scope>NUCLEOTIDE SEQUENCE [LARGE SCALE GENOMIC DNA]</scope>
    <source>
        <strain>PC1</strain>
    </source>
</reference>
<proteinExistence type="inferred from homology"/>
<gene>
    <name evidence="1" type="primary">aroL</name>
    <name type="ordered locus">PC1_0997</name>
</gene>
<sequence>MTHPIFMVGARGCGKTTVGHQLAQALGYDFVDTDLFMQQTTNMTVADVVAQEGWHGFRQRESLALQQVTSNRCIIATGGGMVLAEANRRFMHDKGTVIYLHADAELLAQRLEENPQDNQRPTLTGRPIAEEMADVLAAREALYRGVAHHVIDASQAPEAIVASVLKALRLSAA</sequence>
<name>AROL_PECCP</name>
<dbReference type="EC" id="2.7.1.71" evidence="1"/>
<dbReference type="EMBL" id="CP001657">
    <property type="protein sequence ID" value="ACT12046.1"/>
    <property type="molecule type" value="Genomic_DNA"/>
</dbReference>
<dbReference type="RefSeq" id="WP_012773682.1">
    <property type="nucleotide sequence ID" value="NC_012917.1"/>
</dbReference>
<dbReference type="SMR" id="C6DB04"/>
<dbReference type="STRING" id="561230.PC1_0997"/>
<dbReference type="GeneID" id="67795226"/>
<dbReference type="KEGG" id="pct:PC1_0997"/>
<dbReference type="eggNOG" id="COG0703">
    <property type="taxonomic scope" value="Bacteria"/>
</dbReference>
<dbReference type="HOGENOM" id="CLU_057607_4_3_6"/>
<dbReference type="OrthoDB" id="9800332at2"/>
<dbReference type="UniPathway" id="UPA00053">
    <property type="reaction ID" value="UER00088"/>
</dbReference>
<dbReference type="Proteomes" id="UP000002736">
    <property type="component" value="Chromosome"/>
</dbReference>
<dbReference type="GO" id="GO:0005829">
    <property type="term" value="C:cytosol"/>
    <property type="evidence" value="ECO:0007669"/>
    <property type="project" value="TreeGrafter"/>
</dbReference>
<dbReference type="GO" id="GO:0005524">
    <property type="term" value="F:ATP binding"/>
    <property type="evidence" value="ECO:0007669"/>
    <property type="project" value="UniProtKB-UniRule"/>
</dbReference>
<dbReference type="GO" id="GO:0000287">
    <property type="term" value="F:magnesium ion binding"/>
    <property type="evidence" value="ECO:0007669"/>
    <property type="project" value="UniProtKB-UniRule"/>
</dbReference>
<dbReference type="GO" id="GO:0004765">
    <property type="term" value="F:shikimate kinase activity"/>
    <property type="evidence" value="ECO:0007669"/>
    <property type="project" value="UniProtKB-UniRule"/>
</dbReference>
<dbReference type="GO" id="GO:0008652">
    <property type="term" value="P:amino acid biosynthetic process"/>
    <property type="evidence" value="ECO:0007669"/>
    <property type="project" value="UniProtKB-KW"/>
</dbReference>
<dbReference type="GO" id="GO:0009073">
    <property type="term" value="P:aromatic amino acid family biosynthetic process"/>
    <property type="evidence" value="ECO:0007669"/>
    <property type="project" value="UniProtKB-KW"/>
</dbReference>
<dbReference type="GO" id="GO:0009423">
    <property type="term" value="P:chorismate biosynthetic process"/>
    <property type="evidence" value="ECO:0007669"/>
    <property type="project" value="UniProtKB-UniRule"/>
</dbReference>
<dbReference type="CDD" id="cd00464">
    <property type="entry name" value="SK"/>
    <property type="match status" value="1"/>
</dbReference>
<dbReference type="Gene3D" id="3.40.50.300">
    <property type="entry name" value="P-loop containing nucleotide triphosphate hydrolases"/>
    <property type="match status" value="1"/>
</dbReference>
<dbReference type="HAMAP" id="MF_00109">
    <property type="entry name" value="Shikimate_kinase"/>
    <property type="match status" value="1"/>
</dbReference>
<dbReference type="HAMAP" id="MF_01269">
    <property type="entry name" value="Shikimate_kinase_2"/>
    <property type="match status" value="1"/>
</dbReference>
<dbReference type="InterPro" id="IPR027417">
    <property type="entry name" value="P-loop_NTPase"/>
</dbReference>
<dbReference type="InterPro" id="IPR031322">
    <property type="entry name" value="Shikimate/glucono_kinase"/>
</dbReference>
<dbReference type="InterPro" id="IPR000623">
    <property type="entry name" value="Shikimate_kinase/TSH1"/>
</dbReference>
<dbReference type="InterPro" id="IPR027544">
    <property type="entry name" value="Shikimate_kinase_2"/>
</dbReference>
<dbReference type="InterPro" id="IPR023000">
    <property type="entry name" value="Shikimate_kinase_CS"/>
</dbReference>
<dbReference type="NCBIfam" id="NF002988">
    <property type="entry name" value="PRK03731.1"/>
    <property type="match status" value="1"/>
</dbReference>
<dbReference type="PANTHER" id="PTHR21087">
    <property type="entry name" value="SHIKIMATE KINASE"/>
    <property type="match status" value="1"/>
</dbReference>
<dbReference type="PANTHER" id="PTHR21087:SF21">
    <property type="entry name" value="SHIKIMATE KINASE 2"/>
    <property type="match status" value="1"/>
</dbReference>
<dbReference type="Pfam" id="PF01202">
    <property type="entry name" value="SKI"/>
    <property type="match status" value="1"/>
</dbReference>
<dbReference type="PRINTS" id="PR01100">
    <property type="entry name" value="SHIKIMTKNASE"/>
</dbReference>
<dbReference type="SUPFAM" id="SSF52540">
    <property type="entry name" value="P-loop containing nucleoside triphosphate hydrolases"/>
    <property type="match status" value="1"/>
</dbReference>
<dbReference type="PROSITE" id="PS01128">
    <property type="entry name" value="SHIKIMATE_KINASE"/>
    <property type="match status" value="1"/>
</dbReference>
<accession>C6DB04</accession>
<protein>
    <recommendedName>
        <fullName evidence="1">Shikimate kinase 2</fullName>
        <shortName evidence="1">SK 2</shortName>
        <ecNumber evidence="1">2.7.1.71</ecNumber>
    </recommendedName>
</protein>
<comment type="function">
    <text evidence="1">Catalyzes the specific phosphorylation of the 3-hydroxyl group of shikimic acid using ATP as a cosubstrate.</text>
</comment>
<comment type="catalytic activity">
    <reaction evidence="1">
        <text>shikimate + ATP = 3-phosphoshikimate + ADP + H(+)</text>
        <dbReference type="Rhea" id="RHEA:13121"/>
        <dbReference type="ChEBI" id="CHEBI:15378"/>
        <dbReference type="ChEBI" id="CHEBI:30616"/>
        <dbReference type="ChEBI" id="CHEBI:36208"/>
        <dbReference type="ChEBI" id="CHEBI:145989"/>
        <dbReference type="ChEBI" id="CHEBI:456216"/>
        <dbReference type="EC" id="2.7.1.71"/>
    </reaction>
</comment>
<comment type="cofactor">
    <cofactor evidence="1">
        <name>Mg(2+)</name>
        <dbReference type="ChEBI" id="CHEBI:18420"/>
    </cofactor>
    <text evidence="1">Binds 1 Mg(2+) ion per subunit.</text>
</comment>
<comment type="pathway">
    <text evidence="1">Metabolic intermediate biosynthesis; chorismate biosynthesis; chorismate from D-erythrose 4-phosphate and phosphoenolpyruvate: step 5/7.</text>
</comment>
<comment type="subunit">
    <text evidence="1">Monomer.</text>
</comment>
<comment type="subcellular location">
    <subcellularLocation>
        <location evidence="1">Cytoplasm</location>
    </subcellularLocation>
</comment>
<comment type="domain">
    <text evidence="1">The LID domain closes over the active site upon ATP binding.</text>
</comment>
<comment type="similarity">
    <text evidence="1">Belongs to the shikimate kinase family. AroL subfamily.</text>
</comment>
<organism>
    <name type="scientific">Pectobacterium carotovorum subsp. carotovorum (strain PC1)</name>
    <dbReference type="NCBI Taxonomy" id="561230"/>
    <lineage>
        <taxon>Bacteria</taxon>
        <taxon>Pseudomonadati</taxon>
        <taxon>Pseudomonadota</taxon>
        <taxon>Gammaproteobacteria</taxon>
        <taxon>Enterobacterales</taxon>
        <taxon>Pectobacteriaceae</taxon>
        <taxon>Pectobacterium</taxon>
    </lineage>
</organism>
<evidence type="ECO:0000255" key="1">
    <source>
        <dbReference type="HAMAP-Rule" id="MF_01269"/>
    </source>
</evidence>
<feature type="chain" id="PRO_1000214150" description="Shikimate kinase 2">
    <location>
        <begin position="1"/>
        <end position="173"/>
    </location>
</feature>
<feature type="region of interest" description="LID domain">
    <location>
        <begin position="112"/>
        <end position="126"/>
    </location>
</feature>
<feature type="binding site" evidence="1">
    <location>
        <begin position="12"/>
        <end position="17"/>
    </location>
    <ligand>
        <name>ATP</name>
        <dbReference type="ChEBI" id="CHEBI:30616"/>
    </ligand>
</feature>
<feature type="binding site" evidence="1">
    <location>
        <position position="16"/>
    </location>
    <ligand>
        <name>Mg(2+)</name>
        <dbReference type="ChEBI" id="CHEBI:18420"/>
    </ligand>
</feature>
<feature type="binding site" evidence="1">
    <location>
        <position position="32"/>
    </location>
    <ligand>
        <name>Mg(2+)</name>
        <dbReference type="ChEBI" id="CHEBI:18420"/>
    </ligand>
</feature>
<feature type="binding site" evidence="1">
    <location>
        <position position="34"/>
    </location>
    <ligand>
        <name>substrate</name>
    </ligand>
</feature>
<feature type="binding site" evidence="1">
    <location>
        <position position="58"/>
    </location>
    <ligand>
        <name>substrate</name>
    </ligand>
</feature>
<feature type="binding site" evidence="1">
    <location>
        <position position="79"/>
    </location>
    <ligand>
        <name>substrate</name>
    </ligand>
</feature>
<feature type="binding site" evidence="1">
    <location>
        <position position="120"/>
    </location>
    <ligand>
        <name>ATP</name>
        <dbReference type="ChEBI" id="CHEBI:30616"/>
    </ligand>
</feature>
<feature type="binding site" evidence="1">
    <location>
        <position position="139"/>
    </location>
    <ligand>
        <name>substrate</name>
    </ligand>
</feature>
<feature type="binding site" evidence="1">
    <location>
        <position position="155"/>
    </location>
    <ligand>
        <name>ATP</name>
        <dbReference type="ChEBI" id="CHEBI:30616"/>
    </ligand>
</feature>